<dbReference type="EC" id="6.3.4.3" evidence="1"/>
<dbReference type="EMBL" id="CP000386">
    <property type="protein sequence ID" value="ABG05439.1"/>
    <property type="molecule type" value="Genomic_DNA"/>
</dbReference>
<dbReference type="SMR" id="Q1AT39"/>
<dbReference type="STRING" id="266117.Rxyl_2519"/>
<dbReference type="KEGG" id="rxy:Rxyl_2519"/>
<dbReference type="eggNOG" id="COG2759">
    <property type="taxonomic scope" value="Bacteria"/>
</dbReference>
<dbReference type="HOGENOM" id="CLU_003601_3_3_11"/>
<dbReference type="OrthoDB" id="9761733at2"/>
<dbReference type="PhylomeDB" id="Q1AT39"/>
<dbReference type="UniPathway" id="UPA00193"/>
<dbReference type="Proteomes" id="UP000006637">
    <property type="component" value="Chromosome"/>
</dbReference>
<dbReference type="GO" id="GO:0005524">
    <property type="term" value="F:ATP binding"/>
    <property type="evidence" value="ECO:0007669"/>
    <property type="project" value="UniProtKB-UniRule"/>
</dbReference>
<dbReference type="GO" id="GO:0004329">
    <property type="term" value="F:formate-tetrahydrofolate ligase activity"/>
    <property type="evidence" value="ECO:0007669"/>
    <property type="project" value="UniProtKB-UniRule"/>
</dbReference>
<dbReference type="GO" id="GO:0035999">
    <property type="term" value="P:tetrahydrofolate interconversion"/>
    <property type="evidence" value="ECO:0007669"/>
    <property type="project" value="UniProtKB-UniRule"/>
</dbReference>
<dbReference type="CDD" id="cd00477">
    <property type="entry name" value="FTHFS"/>
    <property type="match status" value="1"/>
</dbReference>
<dbReference type="FunFam" id="3.30.1510.10:FF:000001">
    <property type="entry name" value="Formate--tetrahydrofolate ligase"/>
    <property type="match status" value="1"/>
</dbReference>
<dbReference type="FunFam" id="3.10.410.10:FF:000001">
    <property type="entry name" value="Putative formate--tetrahydrofolate ligase"/>
    <property type="match status" value="1"/>
</dbReference>
<dbReference type="Gene3D" id="3.30.1510.10">
    <property type="entry name" value="Domain 2, N(10)-formyltetrahydrofolate synthetase"/>
    <property type="match status" value="1"/>
</dbReference>
<dbReference type="Gene3D" id="3.10.410.10">
    <property type="entry name" value="Formyltetrahydrofolate synthetase, domain 3"/>
    <property type="match status" value="1"/>
</dbReference>
<dbReference type="Gene3D" id="3.40.50.300">
    <property type="entry name" value="P-loop containing nucleotide triphosphate hydrolases"/>
    <property type="match status" value="1"/>
</dbReference>
<dbReference type="HAMAP" id="MF_01543">
    <property type="entry name" value="FTHFS"/>
    <property type="match status" value="1"/>
</dbReference>
<dbReference type="InterPro" id="IPR000559">
    <property type="entry name" value="Formate_THF_ligase"/>
</dbReference>
<dbReference type="InterPro" id="IPR020628">
    <property type="entry name" value="Formate_THF_ligase_CS"/>
</dbReference>
<dbReference type="InterPro" id="IPR027417">
    <property type="entry name" value="P-loop_NTPase"/>
</dbReference>
<dbReference type="NCBIfam" id="NF010030">
    <property type="entry name" value="PRK13505.1"/>
    <property type="match status" value="1"/>
</dbReference>
<dbReference type="Pfam" id="PF01268">
    <property type="entry name" value="FTHFS"/>
    <property type="match status" value="1"/>
</dbReference>
<dbReference type="SUPFAM" id="SSF52540">
    <property type="entry name" value="P-loop containing nucleoside triphosphate hydrolases"/>
    <property type="match status" value="1"/>
</dbReference>
<dbReference type="PROSITE" id="PS00721">
    <property type="entry name" value="FTHFS_1"/>
    <property type="match status" value="1"/>
</dbReference>
<dbReference type="PROSITE" id="PS00722">
    <property type="entry name" value="FTHFS_2"/>
    <property type="match status" value="1"/>
</dbReference>
<protein>
    <recommendedName>
        <fullName evidence="1">Formate--tetrahydrofolate ligase 3</fullName>
        <ecNumber evidence="1">6.3.4.3</ecNumber>
    </recommendedName>
    <alternativeName>
        <fullName evidence="1">Formyltetrahydrofolate synthetase 3</fullName>
        <shortName evidence="1">FHS 3</shortName>
        <shortName evidence="1">FTHFS 3</shortName>
    </alternativeName>
</protein>
<feature type="chain" id="PRO_0000293056" description="Formate--tetrahydrofolate ligase 3">
    <location>
        <begin position="1"/>
        <end position="573"/>
    </location>
</feature>
<feature type="binding site" evidence="1">
    <location>
        <begin position="66"/>
        <end position="73"/>
    </location>
    <ligand>
        <name>ATP</name>
        <dbReference type="ChEBI" id="CHEBI:30616"/>
    </ligand>
</feature>
<reference key="1">
    <citation type="submission" date="2006-06" db="EMBL/GenBank/DDBJ databases">
        <title>Complete sequence of Rubrobacter xylanophilus DSM 9941.</title>
        <authorList>
            <consortium name="US DOE Joint Genome Institute"/>
            <person name="Copeland A."/>
            <person name="Lucas S."/>
            <person name="Lapidus A."/>
            <person name="Barry K."/>
            <person name="Detter J.C."/>
            <person name="Glavina del Rio T."/>
            <person name="Hammon N."/>
            <person name="Israni S."/>
            <person name="Dalin E."/>
            <person name="Tice H."/>
            <person name="Pitluck S."/>
            <person name="Munk A.C."/>
            <person name="Brettin T."/>
            <person name="Bruce D."/>
            <person name="Han C."/>
            <person name="Tapia R."/>
            <person name="Gilna P."/>
            <person name="Schmutz J."/>
            <person name="Larimer F."/>
            <person name="Land M."/>
            <person name="Hauser L."/>
            <person name="Kyrpides N."/>
            <person name="Lykidis A."/>
            <person name="da Costa M.S."/>
            <person name="Rainey F.A."/>
            <person name="Empadinhas N."/>
            <person name="Jolivet E."/>
            <person name="Battista J.R."/>
            <person name="Richardson P."/>
        </authorList>
    </citation>
    <scope>NUCLEOTIDE SEQUENCE [LARGE SCALE GENOMIC DNA]</scope>
    <source>
        <strain>DSM 9941 / JCM 11954 / NBRC 16129 / PRD-1</strain>
    </source>
</reference>
<proteinExistence type="inferred from homology"/>
<sequence>MLTNLEIARGAKLLPIEEVGRSMGLREERHLEPYGRHVAKVDLCAIEDLSERPKAKYILVSAITPTPLGEGKTTTTVGLGQAFSHIGKRATIAIRQASMGPAFGIKGGAAGGGYSQVVPMERLNLHLTGDLHAVTEAHNMLAAMIDNHLYHGNGLGIEPHSISWRRVMDVNDRSLRNIVIGLGARTDGVPRQSGFDITAASEVMAILALASSLEDLRERLGRIVIGHNREGNPVSAEDVRGAGAMAVILKEAIKPNLMQTLEGTPALVHAGPFGNIATGNSSVVADLIGIRTADYLITEAGFGADMGAERFFNIKCRISGLEPDAAVVVATVRALKAHSGRYQIKAGAPLPEELLEENPQDVLAGAENLKKQIENIKLHGVPAVVAINAFPTDHPSEHKAIEEAAKEVGARCAVCRHFTEGGKGAVELARALEETIEENERERRRGGGGSFRFLYPLEMPLKQKIETIAREVYGAEGVEYDAEALRALEGFERAGFGRLPVCLAKTHLSLSSDPALKGAPRGWKLSVREVRASVGAGFIYPICGQMRTMPGLSAHPAAERIDLDGEGNVVGLF</sequence>
<evidence type="ECO:0000255" key="1">
    <source>
        <dbReference type="HAMAP-Rule" id="MF_01543"/>
    </source>
</evidence>
<comment type="catalytic activity">
    <reaction evidence="1">
        <text>(6S)-5,6,7,8-tetrahydrofolate + formate + ATP = (6R)-10-formyltetrahydrofolate + ADP + phosphate</text>
        <dbReference type="Rhea" id="RHEA:20221"/>
        <dbReference type="ChEBI" id="CHEBI:15740"/>
        <dbReference type="ChEBI" id="CHEBI:30616"/>
        <dbReference type="ChEBI" id="CHEBI:43474"/>
        <dbReference type="ChEBI" id="CHEBI:57453"/>
        <dbReference type="ChEBI" id="CHEBI:195366"/>
        <dbReference type="ChEBI" id="CHEBI:456216"/>
        <dbReference type="EC" id="6.3.4.3"/>
    </reaction>
</comment>
<comment type="pathway">
    <text evidence="1">One-carbon metabolism; tetrahydrofolate interconversion.</text>
</comment>
<comment type="similarity">
    <text evidence="1">Belongs to the formate--tetrahydrofolate ligase family.</text>
</comment>
<gene>
    <name evidence="1" type="primary">fhs3</name>
    <name type="ordered locus">Rxyl_2519</name>
</gene>
<keyword id="KW-0067">ATP-binding</keyword>
<keyword id="KW-0436">Ligase</keyword>
<keyword id="KW-0547">Nucleotide-binding</keyword>
<keyword id="KW-0554">One-carbon metabolism</keyword>
<keyword id="KW-1185">Reference proteome</keyword>
<name>FTHS3_RUBXD</name>
<accession>Q1AT39</accession>
<organism>
    <name type="scientific">Rubrobacter xylanophilus (strain DSM 9941 / JCM 11954 / NBRC 16129 / PRD-1)</name>
    <dbReference type="NCBI Taxonomy" id="266117"/>
    <lineage>
        <taxon>Bacteria</taxon>
        <taxon>Bacillati</taxon>
        <taxon>Actinomycetota</taxon>
        <taxon>Rubrobacteria</taxon>
        <taxon>Rubrobacterales</taxon>
        <taxon>Rubrobacteraceae</taxon>
        <taxon>Rubrobacter</taxon>
    </lineage>
</organism>